<feature type="chain" id="PRO_0000165331" description="Uncharacterized 19.2 kDa protein in rep-hol intergenic region">
    <location>
        <begin position="1"/>
        <end position="166"/>
    </location>
</feature>
<dbReference type="EMBL" id="U24159">
    <property type="protein sequence ID" value="AAB09206.1"/>
    <property type="molecule type" value="Genomic_DNA"/>
</dbReference>
<dbReference type="PIR" id="S69527">
    <property type="entry name" value="S69527"/>
</dbReference>
<dbReference type="RefSeq" id="NP_043490.1">
    <property type="nucleotide sequence ID" value="NC_001697.1"/>
</dbReference>
<dbReference type="GeneID" id="1261108"/>
<dbReference type="KEGG" id="vg:1261108"/>
<dbReference type="Proteomes" id="UP000001713">
    <property type="component" value="Segment"/>
</dbReference>
<dbReference type="InterPro" id="IPR009678">
    <property type="entry name" value="Phage_tail_completion_R"/>
</dbReference>
<dbReference type="Pfam" id="PF06891">
    <property type="entry name" value="P2_Phage_GpR"/>
    <property type="match status" value="1"/>
</dbReference>
<proteinExistence type="predicted"/>
<organism>
    <name type="scientific">Haemophilus phage HP1 (strain HP1c1)</name>
    <name type="common">Bacteriophage HP1</name>
    <dbReference type="NCBI Taxonomy" id="1289570"/>
    <lineage>
        <taxon>Viruses</taxon>
        <taxon>Duplodnaviria</taxon>
        <taxon>Heunggongvirae</taxon>
        <taxon>Uroviricota</taxon>
        <taxon>Caudoviricetes</taxon>
        <taxon>Peduoviridae</taxon>
        <taxon>Hpunavirus</taxon>
        <taxon>Haemophilus phage HP1</taxon>
    </lineage>
</organism>
<accession>P51723</accession>
<reference key="1">
    <citation type="journal article" date="1996" name="Nucleic Acids Res.">
        <title>The complete nucleotide sequence of bacteriophage HP1 DNA.</title>
        <authorList>
            <person name="Esposito D."/>
            <person name="Fitzmaurice W.P."/>
            <person name="Benjamin R.C."/>
            <person name="Goodman S.D."/>
            <person name="Waldman A.S."/>
            <person name="Scocca J.J."/>
        </authorList>
    </citation>
    <scope>NUCLEOTIDE SEQUENCE [LARGE SCALE GENOMIC DNA]</scope>
</reference>
<reference key="2">
    <citation type="journal article" date="1984" name="Gene">
        <title>Nucleotide sequence of cloned DNA segments of the Haemophilus influenzae bacteriophage HP1c1.</title>
        <authorList>
            <person name="Benjamin R.C."/>
            <person name="Fitzmaurice W.P."/>
            <person name="Huang P.C."/>
            <person name="Scocca J.J."/>
        </authorList>
    </citation>
    <scope>NUCLEOTIDE SEQUENCE [GENOMIC DNA] OF 148-166</scope>
</reference>
<organismHost>
    <name type="scientific">Haemophilus influenzae</name>
    <dbReference type="NCBI Taxonomy" id="727"/>
</organismHost>
<sequence length="166" mass="19235">MATVKKMLYQQLTAFLLTKLPKRYHGNFYSWIEDGKLLNEGRQVTENGIEVCHLSYNGVFHFEALPFNEISPAYLMAHIQVWVNENDPMRDVLDESEIPFDLDIIDDNTTDLIFTIAFREPLTAMEDNEGELKIDGVNYRLDEIEVFTAEEIDVVVRVEHEHPNGD</sequence>
<protein>
    <recommendedName>
        <fullName>Uncharacterized 19.2 kDa protein in rep-hol intergenic region</fullName>
    </recommendedName>
    <alternativeName>
        <fullName>ORF21</fullName>
    </alternativeName>
</protein>
<keyword id="KW-1185">Reference proteome</keyword>
<name>YO21_BPHC1</name>